<reference key="1">
    <citation type="submission" date="2007-05" db="EMBL/GenBank/DDBJ databases">
        <title>Complete sequence of Pseudomonas putida F1.</title>
        <authorList>
            <consortium name="US DOE Joint Genome Institute"/>
            <person name="Copeland A."/>
            <person name="Lucas S."/>
            <person name="Lapidus A."/>
            <person name="Barry K."/>
            <person name="Detter J.C."/>
            <person name="Glavina del Rio T."/>
            <person name="Hammon N."/>
            <person name="Israni S."/>
            <person name="Dalin E."/>
            <person name="Tice H."/>
            <person name="Pitluck S."/>
            <person name="Chain P."/>
            <person name="Malfatti S."/>
            <person name="Shin M."/>
            <person name="Vergez L."/>
            <person name="Schmutz J."/>
            <person name="Larimer F."/>
            <person name="Land M."/>
            <person name="Hauser L."/>
            <person name="Kyrpides N."/>
            <person name="Lykidis A."/>
            <person name="Parales R."/>
            <person name="Richardson P."/>
        </authorList>
    </citation>
    <scope>NUCLEOTIDE SEQUENCE [LARGE SCALE GENOMIC DNA]</scope>
    <source>
        <strain>ATCC 700007 / DSM 6899 / JCM 31910 / BCRC 17059 / LMG 24140 / F1</strain>
    </source>
</reference>
<name>MURA_PSEP1</name>
<protein>
    <recommendedName>
        <fullName evidence="1">UDP-N-acetylglucosamine 1-carboxyvinyltransferase</fullName>
        <ecNumber evidence="1">2.5.1.7</ecNumber>
    </recommendedName>
    <alternativeName>
        <fullName evidence="1">Enoylpyruvate transferase</fullName>
    </alternativeName>
    <alternativeName>
        <fullName evidence="1">UDP-N-acetylglucosamine enolpyruvyl transferase</fullName>
        <shortName evidence="1">EPT</shortName>
    </alternativeName>
</protein>
<dbReference type="EC" id="2.5.1.7" evidence="1"/>
<dbReference type="EMBL" id="CP000712">
    <property type="protein sequence ID" value="ABQ77164.1"/>
    <property type="molecule type" value="Genomic_DNA"/>
</dbReference>
<dbReference type="SMR" id="A5VZ54"/>
<dbReference type="KEGG" id="ppf:Pput_1003"/>
<dbReference type="eggNOG" id="COG0766">
    <property type="taxonomic scope" value="Bacteria"/>
</dbReference>
<dbReference type="HOGENOM" id="CLU_027387_0_0_6"/>
<dbReference type="UniPathway" id="UPA00219"/>
<dbReference type="GO" id="GO:0005737">
    <property type="term" value="C:cytoplasm"/>
    <property type="evidence" value="ECO:0007669"/>
    <property type="project" value="UniProtKB-SubCell"/>
</dbReference>
<dbReference type="GO" id="GO:0008760">
    <property type="term" value="F:UDP-N-acetylglucosamine 1-carboxyvinyltransferase activity"/>
    <property type="evidence" value="ECO:0007669"/>
    <property type="project" value="UniProtKB-UniRule"/>
</dbReference>
<dbReference type="GO" id="GO:0051301">
    <property type="term" value="P:cell division"/>
    <property type="evidence" value="ECO:0007669"/>
    <property type="project" value="UniProtKB-KW"/>
</dbReference>
<dbReference type="GO" id="GO:0071555">
    <property type="term" value="P:cell wall organization"/>
    <property type="evidence" value="ECO:0007669"/>
    <property type="project" value="UniProtKB-KW"/>
</dbReference>
<dbReference type="GO" id="GO:0009252">
    <property type="term" value="P:peptidoglycan biosynthetic process"/>
    <property type="evidence" value="ECO:0007669"/>
    <property type="project" value="UniProtKB-UniRule"/>
</dbReference>
<dbReference type="GO" id="GO:0008360">
    <property type="term" value="P:regulation of cell shape"/>
    <property type="evidence" value="ECO:0007669"/>
    <property type="project" value="UniProtKB-KW"/>
</dbReference>
<dbReference type="GO" id="GO:0019277">
    <property type="term" value="P:UDP-N-acetylgalactosamine biosynthetic process"/>
    <property type="evidence" value="ECO:0007669"/>
    <property type="project" value="InterPro"/>
</dbReference>
<dbReference type="CDD" id="cd01555">
    <property type="entry name" value="UdpNAET"/>
    <property type="match status" value="1"/>
</dbReference>
<dbReference type="FunFam" id="3.65.10.10:FF:000002">
    <property type="entry name" value="UDP-N-acetylglucosamine 1-carboxyvinyltransferase"/>
    <property type="match status" value="1"/>
</dbReference>
<dbReference type="Gene3D" id="3.65.10.10">
    <property type="entry name" value="Enolpyruvate transferase domain"/>
    <property type="match status" value="2"/>
</dbReference>
<dbReference type="HAMAP" id="MF_00111">
    <property type="entry name" value="MurA"/>
    <property type="match status" value="1"/>
</dbReference>
<dbReference type="InterPro" id="IPR001986">
    <property type="entry name" value="Enolpyruvate_Tfrase_dom"/>
</dbReference>
<dbReference type="InterPro" id="IPR036968">
    <property type="entry name" value="Enolpyruvate_Tfrase_sf"/>
</dbReference>
<dbReference type="InterPro" id="IPR050068">
    <property type="entry name" value="MurA_subfamily"/>
</dbReference>
<dbReference type="InterPro" id="IPR013792">
    <property type="entry name" value="RNA3'P_cycl/enolpyr_Trfase_a/b"/>
</dbReference>
<dbReference type="InterPro" id="IPR005750">
    <property type="entry name" value="UDP_GlcNAc_COvinyl_MurA"/>
</dbReference>
<dbReference type="NCBIfam" id="TIGR01072">
    <property type="entry name" value="murA"/>
    <property type="match status" value="1"/>
</dbReference>
<dbReference type="NCBIfam" id="NF006873">
    <property type="entry name" value="PRK09369.1"/>
    <property type="match status" value="1"/>
</dbReference>
<dbReference type="PANTHER" id="PTHR43783">
    <property type="entry name" value="UDP-N-ACETYLGLUCOSAMINE 1-CARBOXYVINYLTRANSFERASE"/>
    <property type="match status" value="1"/>
</dbReference>
<dbReference type="PANTHER" id="PTHR43783:SF1">
    <property type="entry name" value="UDP-N-ACETYLGLUCOSAMINE 1-CARBOXYVINYLTRANSFERASE"/>
    <property type="match status" value="1"/>
</dbReference>
<dbReference type="Pfam" id="PF00275">
    <property type="entry name" value="EPSP_synthase"/>
    <property type="match status" value="1"/>
</dbReference>
<dbReference type="SUPFAM" id="SSF55205">
    <property type="entry name" value="EPT/RTPC-like"/>
    <property type="match status" value="1"/>
</dbReference>
<organism>
    <name type="scientific">Pseudomonas putida (strain ATCC 700007 / DSM 6899 / JCM 31910 / BCRC 17059 / LMG 24140 / F1)</name>
    <dbReference type="NCBI Taxonomy" id="351746"/>
    <lineage>
        <taxon>Bacteria</taxon>
        <taxon>Pseudomonadati</taxon>
        <taxon>Pseudomonadota</taxon>
        <taxon>Gammaproteobacteria</taxon>
        <taxon>Pseudomonadales</taxon>
        <taxon>Pseudomonadaceae</taxon>
        <taxon>Pseudomonas</taxon>
    </lineage>
</organism>
<sequence>MDKLIITGGARLDGEIRISGAKNAALPILAATLLADGPVTVGNLPHLHDITTMIELFGRMGIEPVIDEKLSVEIDPRTIKTLVAPYELVKTMRASILVLGPMVARFGEAEVALPGGCAIGSRPVDLHIRGLEAMGAKIEVEGGYIKAKAPEGGLRGAHFFFDTVSVTGTENIMMAAALAKGRSVLQNAAREPEVVDLANFINAMGGNIQGAGTDTITIDGVERLDSANYRVMPDRIETGTYLVAAAVTGGRVKVKDTDPTILEAVLEKLKEAGADINTGEDWIELDMHGKRPKAVNLRTAPYPAFPTDMQAQFISLNAIAEGTGAVIETIFENRFMHVYEMHRMGAQIQVEGNTAIVTGVKALKGAPVMATDLRASASLVLSALVAEGDTLIDRIYHIDRGYECIEEKLQMLGAKIRRVPG</sequence>
<proteinExistence type="inferred from homology"/>
<accession>A5VZ54</accession>
<feature type="chain" id="PRO_1000023075" description="UDP-N-acetylglucosamine 1-carboxyvinyltransferase">
    <location>
        <begin position="1"/>
        <end position="421"/>
    </location>
</feature>
<feature type="active site" description="Proton donor" evidence="1">
    <location>
        <position position="117"/>
    </location>
</feature>
<feature type="binding site" evidence="1">
    <location>
        <begin position="22"/>
        <end position="23"/>
    </location>
    <ligand>
        <name>phosphoenolpyruvate</name>
        <dbReference type="ChEBI" id="CHEBI:58702"/>
    </ligand>
</feature>
<feature type="binding site" evidence="1">
    <location>
        <position position="93"/>
    </location>
    <ligand>
        <name>UDP-N-acetyl-alpha-D-glucosamine</name>
        <dbReference type="ChEBI" id="CHEBI:57705"/>
    </ligand>
</feature>
<feature type="binding site" evidence="1">
    <location>
        <begin position="122"/>
        <end position="126"/>
    </location>
    <ligand>
        <name>UDP-N-acetyl-alpha-D-glucosamine</name>
        <dbReference type="ChEBI" id="CHEBI:57705"/>
    </ligand>
</feature>
<feature type="binding site" evidence="1">
    <location>
        <position position="308"/>
    </location>
    <ligand>
        <name>UDP-N-acetyl-alpha-D-glucosamine</name>
        <dbReference type="ChEBI" id="CHEBI:57705"/>
    </ligand>
</feature>
<feature type="binding site" evidence="1">
    <location>
        <position position="330"/>
    </location>
    <ligand>
        <name>UDP-N-acetyl-alpha-D-glucosamine</name>
        <dbReference type="ChEBI" id="CHEBI:57705"/>
    </ligand>
</feature>
<feature type="modified residue" description="2-(S-cysteinyl)pyruvic acid O-phosphothioketal" evidence="1">
    <location>
        <position position="117"/>
    </location>
</feature>
<evidence type="ECO:0000255" key="1">
    <source>
        <dbReference type="HAMAP-Rule" id="MF_00111"/>
    </source>
</evidence>
<comment type="function">
    <text evidence="1">Cell wall formation. Adds enolpyruvyl to UDP-N-acetylglucosamine.</text>
</comment>
<comment type="catalytic activity">
    <reaction evidence="1">
        <text>phosphoenolpyruvate + UDP-N-acetyl-alpha-D-glucosamine = UDP-N-acetyl-3-O-(1-carboxyvinyl)-alpha-D-glucosamine + phosphate</text>
        <dbReference type="Rhea" id="RHEA:18681"/>
        <dbReference type="ChEBI" id="CHEBI:43474"/>
        <dbReference type="ChEBI" id="CHEBI:57705"/>
        <dbReference type="ChEBI" id="CHEBI:58702"/>
        <dbReference type="ChEBI" id="CHEBI:68483"/>
        <dbReference type="EC" id="2.5.1.7"/>
    </reaction>
</comment>
<comment type="pathway">
    <text evidence="1">Cell wall biogenesis; peptidoglycan biosynthesis.</text>
</comment>
<comment type="subcellular location">
    <subcellularLocation>
        <location evidence="1">Cytoplasm</location>
    </subcellularLocation>
</comment>
<comment type="similarity">
    <text evidence="1">Belongs to the EPSP synthase family. MurA subfamily.</text>
</comment>
<gene>
    <name evidence="1" type="primary">murA</name>
    <name type="ordered locus">Pput_1003</name>
</gene>
<keyword id="KW-0131">Cell cycle</keyword>
<keyword id="KW-0132">Cell division</keyword>
<keyword id="KW-0133">Cell shape</keyword>
<keyword id="KW-0961">Cell wall biogenesis/degradation</keyword>
<keyword id="KW-0963">Cytoplasm</keyword>
<keyword id="KW-0573">Peptidoglycan synthesis</keyword>
<keyword id="KW-0670">Pyruvate</keyword>
<keyword id="KW-0808">Transferase</keyword>